<feature type="chain" id="PRO_0000035933" description="Ubiquitin">
    <location>
        <begin position="1"/>
        <end position="76"/>
    </location>
</feature>
<feature type="propeptide" id="PRO_0000035934">
    <location>
        <position position="77"/>
    </location>
</feature>
<feature type="domain" description="Ubiquitin-like" evidence="2">
    <location>
        <begin position="1"/>
        <end position="76"/>
    </location>
</feature>
<feature type="cross-link" description="Glycyl lysine isopeptide (Lys-Gly) (interchain with G-Cter in ubiquitin)">
    <location>
        <position position="6"/>
    </location>
</feature>
<feature type="cross-link" description="Glycyl lysine isopeptide (Lys-Gly) (interchain with G-Cter in ubiquitin)">
    <location>
        <position position="11"/>
    </location>
</feature>
<feature type="cross-link" description="Glycyl lysine isopeptide (Lys-Gly) (interchain with G-Cter in ubiquitin)">
    <location>
        <position position="27"/>
    </location>
</feature>
<feature type="cross-link" description="Glycyl lysine isopeptide (Lys-Gly) (interchain with G-Cter in ubiquitin)">
    <location>
        <position position="29"/>
    </location>
</feature>
<feature type="cross-link" description="Glycyl lysine isopeptide (Lys-Gly) (interchain with G-Cter in ubiquitin)">
    <location>
        <position position="33"/>
    </location>
</feature>
<feature type="cross-link" description="Glycyl lysine isopeptide (Lys-Gly) (interchain with G-Cter in ubiquitin)" evidence="1">
    <location>
        <position position="48"/>
    </location>
</feature>
<feature type="cross-link" description="Glycyl lysine isopeptide (Lys-Gly) (interchain with G-Cter in ubiquitin)">
    <location>
        <position position="63"/>
    </location>
</feature>
<feature type="cross-link" description="Glycyl lysine isopeptide (Gly-Lys) (interchain with K-? in acceptor proteins)" evidence="2">
    <location>
        <position position="76"/>
    </location>
</feature>
<protein>
    <recommendedName>
        <fullName>Ubiquitin</fullName>
    </recommendedName>
</protein>
<keyword id="KW-0963">Cytoplasm</keyword>
<keyword id="KW-1017">Isopeptide bond</keyword>
<keyword id="KW-0539">Nucleus</keyword>
<keyword id="KW-1185">Reference proteome</keyword>
<keyword id="KW-0832">Ubl conjugation</keyword>
<comment type="function">
    <text evidence="1">Ubiquitin exists either covalently attached to another protein, or free (unanchored). When covalently bound, it is conjugated to target proteins via an isopeptide bond either as a monomer (monoubiquitin), a polymer linked via different Lys residues of the ubiquitin (polyubiquitin chains) or a linear polymer linked via the initiator Met of the ubiquitin (linear polyubiquitin chains). Polyubiquitin chains, when attached to a target protein, have different functions depending on the Lys residue of the ubiquitin that is linked: Lys-6-linked may be involved in DNA repair; Lys-11-linked is involved in ERAD (endoplasmic reticulum-associated degradation) and in cell-cycle regulation; Lys-29-linked is involved in lysosomal degradation; Lys-33-linked is involved in kinase modification; Lys-48-linked is involved in protein degradation via the proteasome; Lys-63-linked is involved in endocytosis, and DNA-damage responses. Linear polymer chains formed via attachment by the initiator Met lead to cell signaling. Ubiquitin is usually conjugated to Lys residues of target proteins, however, in rare cases, conjugation to Cys or Ser residues has been observed. When polyubiquitin is free (unanchored-polyubiquitin), it also has distinct roles, such as in activation of protein kinases, and in signaling (By similarity).</text>
</comment>
<comment type="subcellular location">
    <subcellularLocation>
        <location evidence="1">Cytoplasm</location>
    </subcellularLocation>
    <subcellularLocation>
        <location evidence="1">Nucleus</location>
    </subcellularLocation>
</comment>
<comment type="similarity">
    <text evidence="3">Belongs to the ubiquitin family.</text>
</comment>
<gene>
    <name type="ordered locus">ECU02_0740i</name>
</gene>
<evidence type="ECO:0000250" key="1"/>
<evidence type="ECO:0000255" key="2">
    <source>
        <dbReference type="PROSITE-ProRule" id="PRU00214"/>
    </source>
</evidence>
<evidence type="ECO:0000305" key="3"/>
<dbReference type="EMBL" id="AL590442">
    <property type="protein sequence ID" value="CAD25104.1"/>
    <property type="molecule type" value="Genomic_DNA"/>
</dbReference>
<dbReference type="RefSeq" id="NP_584600.1">
    <property type="nucleotide sequence ID" value="NM_001040789.1"/>
</dbReference>
<dbReference type="SMR" id="Q8SWD4"/>
<dbReference type="STRING" id="284813.Q8SWD4"/>
<dbReference type="GeneID" id="858590"/>
<dbReference type="KEGG" id="ecu:ECU02_0740i"/>
<dbReference type="VEuPathDB" id="MicrosporidiaDB:ECU02_0740i"/>
<dbReference type="HOGENOM" id="CLU_010412_6_3_1"/>
<dbReference type="InParanoid" id="Q8SWD4"/>
<dbReference type="OMA" id="GGRGCYP"/>
<dbReference type="OrthoDB" id="428577at2759"/>
<dbReference type="Proteomes" id="UP000000819">
    <property type="component" value="Chromosome II"/>
</dbReference>
<dbReference type="GO" id="GO:0005737">
    <property type="term" value="C:cytoplasm"/>
    <property type="evidence" value="ECO:0007669"/>
    <property type="project" value="UniProtKB-SubCell"/>
</dbReference>
<dbReference type="GO" id="GO:0005634">
    <property type="term" value="C:nucleus"/>
    <property type="evidence" value="ECO:0007669"/>
    <property type="project" value="UniProtKB-SubCell"/>
</dbReference>
<dbReference type="CDD" id="cd01803">
    <property type="entry name" value="Ubl_ubiquitin"/>
    <property type="match status" value="1"/>
</dbReference>
<dbReference type="FunFam" id="3.10.20.90:FF:000158">
    <property type="entry name" value="Polyubiquitin 5"/>
    <property type="match status" value="1"/>
</dbReference>
<dbReference type="Gene3D" id="3.10.20.90">
    <property type="entry name" value="Phosphatidylinositol 3-kinase Catalytic Subunit, Chain A, domain 1"/>
    <property type="match status" value="1"/>
</dbReference>
<dbReference type="InterPro" id="IPR000626">
    <property type="entry name" value="Ubiquitin-like_dom"/>
</dbReference>
<dbReference type="InterPro" id="IPR029071">
    <property type="entry name" value="Ubiquitin-like_domsf"/>
</dbReference>
<dbReference type="InterPro" id="IPR019954">
    <property type="entry name" value="Ubiquitin_CS"/>
</dbReference>
<dbReference type="InterPro" id="IPR019956">
    <property type="entry name" value="Ubiquitin_dom"/>
</dbReference>
<dbReference type="InterPro" id="IPR050158">
    <property type="entry name" value="Ubiquitin_ubiquitin-like"/>
</dbReference>
<dbReference type="PANTHER" id="PTHR10666">
    <property type="entry name" value="UBIQUITIN"/>
    <property type="match status" value="1"/>
</dbReference>
<dbReference type="Pfam" id="PF00240">
    <property type="entry name" value="ubiquitin"/>
    <property type="match status" value="1"/>
</dbReference>
<dbReference type="PRINTS" id="PR00348">
    <property type="entry name" value="UBIQUITIN"/>
</dbReference>
<dbReference type="SMART" id="SM00213">
    <property type="entry name" value="UBQ"/>
    <property type="match status" value="1"/>
</dbReference>
<dbReference type="SUPFAM" id="SSF54236">
    <property type="entry name" value="Ubiquitin-like"/>
    <property type="match status" value="1"/>
</dbReference>
<dbReference type="PROSITE" id="PS00299">
    <property type="entry name" value="UBIQUITIN_1"/>
    <property type="match status" value="1"/>
</dbReference>
<dbReference type="PROSITE" id="PS50053">
    <property type="entry name" value="UBIQUITIN_2"/>
    <property type="match status" value="1"/>
</dbReference>
<sequence length="77" mass="8714">MQIFVKTLTGKTITLEVEPSDSIENVKAKIQDKEGIPPDQQRLIFAGKQLEDGRTLSDYNIQKESTLHLVLRLRGGY</sequence>
<proteinExistence type="evidence at protein level"/>
<accession>Q8SWD4</accession>
<name>UBIQ_ENCCU</name>
<reference key="1">
    <citation type="journal article" date="2001" name="Nature">
        <title>Genome sequence and gene compaction of the eukaryote parasite Encephalitozoon cuniculi.</title>
        <authorList>
            <person name="Katinka M.D."/>
            <person name="Duprat S."/>
            <person name="Cornillot E."/>
            <person name="Metenier G."/>
            <person name="Thomarat F."/>
            <person name="Prensier G."/>
            <person name="Barbe V."/>
            <person name="Peyretaillade E."/>
            <person name="Brottier P."/>
            <person name="Wincker P."/>
            <person name="Delbac F."/>
            <person name="El Alaoui H."/>
            <person name="Peyret P."/>
            <person name="Saurin W."/>
            <person name="Gouy M."/>
            <person name="Weissenbach J."/>
            <person name="Vivares C.P."/>
        </authorList>
    </citation>
    <scope>NUCLEOTIDE SEQUENCE [LARGE SCALE GENOMIC DNA]</scope>
    <source>
        <strain>GB-M1</strain>
    </source>
</reference>
<organism>
    <name type="scientific">Encephalitozoon cuniculi (strain GB-M1)</name>
    <name type="common">Microsporidian parasite</name>
    <dbReference type="NCBI Taxonomy" id="284813"/>
    <lineage>
        <taxon>Eukaryota</taxon>
        <taxon>Fungi</taxon>
        <taxon>Fungi incertae sedis</taxon>
        <taxon>Microsporidia</taxon>
        <taxon>Unikaryonidae</taxon>
        <taxon>Encephalitozoon</taxon>
    </lineage>
</organism>